<sequence>MRNDIADPEGPPRKGRLREEGMAALTLGALGVVFGDIGTSPIYAFREALGQAAEDGIVAGEILGVLSLALWALILVVTCKYVLFLMRADNNGEGGVLALMTLAQRSTRRRRTLVMALGAIGAALFYGDGVITPALSVLSAVEGLKTIPGLEHSVSRGEILLITSAILIGLFLMQARGTRIVGRLFGPVCLVWFVTIGGIGLIHIADQPAILAALLPHNGVLFMANHGVAGMFVMGAVFLTVTGAEALTADMGHFGAKPIRTGWLAIVFPALALNYLGQGAFALHRLEVASARGVEFVNQDWFFLMAPGLARIPLVILATCATVIASQAVITGAYSLTRQAIQLGLLPRLKIRQTSEHAAGQIYLPTITMLLFVGVMVLVLGFGSSSAMAAAYGVSVSGTMVVTTCLAFLVVRRSWGWGWPLTVAVIVPLLLLDLFFFGANILRIYEGGWVPLIVAGGVGLLIVTWVRGRKLLLAIDQSQAIELEELARMLRARPPERVPGMAIFLSSGMEAAPSALLHNLKHNKILHERNLALTINTVNQPAVPAAQRLDMTNIDENFTRAVLNYGFMESPDIPRDLAFALRHGDNKLEPMQTSYFIGRSTLRPSKHSGMPFWQDLLFIFLYRNASDPTDFFRIPPNRVVELGSQTTI</sequence>
<evidence type="ECO:0000255" key="1">
    <source>
        <dbReference type="HAMAP-Rule" id="MF_01522"/>
    </source>
</evidence>
<gene>
    <name evidence="1" type="primary">kup1</name>
    <name type="ordered locus">Swit_0101</name>
</gene>
<organism>
    <name type="scientific">Rhizorhabdus wittichii (strain DSM 6014 / CCUG 31198 / JCM 15750 / NBRC 105917 / EY 4224 / RW1)</name>
    <name type="common">Sphingomonas wittichii</name>
    <dbReference type="NCBI Taxonomy" id="392499"/>
    <lineage>
        <taxon>Bacteria</taxon>
        <taxon>Pseudomonadati</taxon>
        <taxon>Pseudomonadota</taxon>
        <taxon>Alphaproteobacteria</taxon>
        <taxon>Sphingomonadales</taxon>
        <taxon>Sphingomonadaceae</taxon>
        <taxon>Rhizorhabdus</taxon>
    </lineage>
</organism>
<proteinExistence type="inferred from homology"/>
<reference key="1">
    <citation type="journal article" date="2010" name="J. Bacteriol.">
        <title>Genome sequence of the dioxin-mineralizing bacterium Sphingomonas wittichii RW1.</title>
        <authorList>
            <person name="Miller T.R."/>
            <person name="Delcher A.L."/>
            <person name="Salzberg S.L."/>
            <person name="Saunders E."/>
            <person name="Detter J.C."/>
            <person name="Halden R.U."/>
        </authorList>
    </citation>
    <scope>NUCLEOTIDE SEQUENCE [LARGE SCALE GENOMIC DNA]</scope>
    <source>
        <strain>DSM 6014 / CCUG 31198 / JCM 15750 / NBRC 105917 / EY 4224 / RW1</strain>
    </source>
</reference>
<accession>A5V2F7</accession>
<dbReference type="EMBL" id="CP000699">
    <property type="protein sequence ID" value="ABQ66473.1"/>
    <property type="molecule type" value="Genomic_DNA"/>
</dbReference>
<dbReference type="STRING" id="392499.Swit_0101"/>
<dbReference type="PaxDb" id="392499-Swit_0101"/>
<dbReference type="KEGG" id="swi:Swit_0101"/>
<dbReference type="eggNOG" id="COG3158">
    <property type="taxonomic scope" value="Bacteria"/>
</dbReference>
<dbReference type="HOGENOM" id="CLU_008142_4_2_5"/>
<dbReference type="OrthoDB" id="9805577at2"/>
<dbReference type="Proteomes" id="UP000001989">
    <property type="component" value="Chromosome"/>
</dbReference>
<dbReference type="GO" id="GO:0005886">
    <property type="term" value="C:plasma membrane"/>
    <property type="evidence" value="ECO:0007669"/>
    <property type="project" value="UniProtKB-SubCell"/>
</dbReference>
<dbReference type="GO" id="GO:0015079">
    <property type="term" value="F:potassium ion transmembrane transporter activity"/>
    <property type="evidence" value="ECO:0007669"/>
    <property type="project" value="UniProtKB-UniRule"/>
</dbReference>
<dbReference type="GO" id="GO:0015293">
    <property type="term" value="F:symporter activity"/>
    <property type="evidence" value="ECO:0007669"/>
    <property type="project" value="UniProtKB-UniRule"/>
</dbReference>
<dbReference type="HAMAP" id="MF_01522">
    <property type="entry name" value="Kup"/>
    <property type="match status" value="1"/>
</dbReference>
<dbReference type="InterPro" id="IPR003855">
    <property type="entry name" value="K+_transporter"/>
</dbReference>
<dbReference type="InterPro" id="IPR053952">
    <property type="entry name" value="K_trans_C"/>
</dbReference>
<dbReference type="InterPro" id="IPR053951">
    <property type="entry name" value="K_trans_N"/>
</dbReference>
<dbReference type="InterPro" id="IPR023051">
    <property type="entry name" value="Kup"/>
</dbReference>
<dbReference type="PANTHER" id="PTHR30540:SF79">
    <property type="entry name" value="LOW AFFINITY POTASSIUM TRANSPORT SYSTEM PROTEIN KUP"/>
    <property type="match status" value="1"/>
</dbReference>
<dbReference type="PANTHER" id="PTHR30540">
    <property type="entry name" value="OSMOTIC STRESS POTASSIUM TRANSPORTER"/>
    <property type="match status" value="1"/>
</dbReference>
<dbReference type="Pfam" id="PF02705">
    <property type="entry name" value="K_trans"/>
    <property type="match status" value="1"/>
</dbReference>
<dbReference type="Pfam" id="PF22776">
    <property type="entry name" value="K_trans_C"/>
    <property type="match status" value="1"/>
</dbReference>
<name>KUP1_RHIWR</name>
<keyword id="KW-0997">Cell inner membrane</keyword>
<keyword id="KW-1003">Cell membrane</keyword>
<keyword id="KW-0406">Ion transport</keyword>
<keyword id="KW-0472">Membrane</keyword>
<keyword id="KW-0630">Potassium</keyword>
<keyword id="KW-0633">Potassium transport</keyword>
<keyword id="KW-1185">Reference proteome</keyword>
<keyword id="KW-0769">Symport</keyword>
<keyword id="KW-0812">Transmembrane</keyword>
<keyword id="KW-1133">Transmembrane helix</keyword>
<keyword id="KW-0813">Transport</keyword>
<comment type="function">
    <text evidence="1">Transport of potassium into the cell. Likely operates as a K(+):H(+) symporter.</text>
</comment>
<comment type="catalytic activity">
    <reaction evidence="1">
        <text>K(+)(in) + H(+)(in) = K(+)(out) + H(+)(out)</text>
        <dbReference type="Rhea" id="RHEA:28490"/>
        <dbReference type="ChEBI" id="CHEBI:15378"/>
        <dbReference type="ChEBI" id="CHEBI:29103"/>
    </reaction>
    <physiologicalReaction direction="right-to-left" evidence="1">
        <dbReference type="Rhea" id="RHEA:28492"/>
    </physiologicalReaction>
</comment>
<comment type="subcellular location">
    <subcellularLocation>
        <location evidence="1">Cell inner membrane</location>
        <topology evidence="1">Multi-pass membrane protein</topology>
    </subcellularLocation>
</comment>
<comment type="similarity">
    <text evidence="1">Belongs to the HAK/KUP transporter (TC 2.A.72) family.</text>
</comment>
<feature type="chain" id="PRO_0000315993" description="Probable potassium transport system protein Kup 1">
    <location>
        <begin position="1"/>
        <end position="648"/>
    </location>
</feature>
<feature type="transmembrane region" description="Helical" evidence="1">
    <location>
        <begin position="25"/>
        <end position="45"/>
    </location>
</feature>
<feature type="transmembrane region" description="Helical" evidence="1">
    <location>
        <begin position="57"/>
        <end position="77"/>
    </location>
</feature>
<feature type="transmembrane region" description="Helical" evidence="1">
    <location>
        <begin position="113"/>
        <end position="133"/>
    </location>
</feature>
<feature type="transmembrane region" description="Helical" evidence="1">
    <location>
        <begin position="153"/>
        <end position="173"/>
    </location>
</feature>
<feature type="transmembrane region" description="Helical" evidence="1">
    <location>
        <begin position="184"/>
        <end position="204"/>
    </location>
</feature>
<feature type="transmembrane region" description="Helical" evidence="1">
    <location>
        <begin position="219"/>
        <end position="239"/>
    </location>
</feature>
<feature type="transmembrane region" description="Helical" evidence="1">
    <location>
        <begin position="263"/>
        <end position="283"/>
    </location>
</feature>
<feature type="transmembrane region" description="Helical" evidence="1">
    <location>
        <begin position="312"/>
        <end position="332"/>
    </location>
</feature>
<feature type="transmembrane region" description="Helical" evidence="1">
    <location>
        <begin position="362"/>
        <end position="382"/>
    </location>
</feature>
<feature type="transmembrane region" description="Helical" evidence="1">
    <location>
        <begin position="391"/>
        <end position="411"/>
    </location>
</feature>
<feature type="transmembrane region" description="Helical" evidence="1">
    <location>
        <begin position="417"/>
        <end position="437"/>
    </location>
</feature>
<feature type="transmembrane region" description="Helical" evidence="1">
    <location>
        <begin position="446"/>
        <end position="466"/>
    </location>
</feature>
<protein>
    <recommendedName>
        <fullName evidence="1">Probable potassium transport system protein Kup 1</fullName>
    </recommendedName>
</protein>